<comment type="function">
    <text>Involved in the transport of the Leukotoxin.</text>
</comment>
<comment type="subcellular location">
    <subcellularLocation>
        <location evidence="2">Cell inner membrane</location>
        <topology evidence="2">Single-pass membrane protein</topology>
    </subcellularLocation>
</comment>
<comment type="similarity">
    <text evidence="2">Belongs to the membrane fusion protein (MFP) (TC 8.A.1) family.</text>
</comment>
<sequence length="478" mass="54761">MKIWLSGIYEFFLRYKNTWAEVWKIRKELDHPNRKKDESEFLPAHLDLIETPVSKKPRLIAYLIMLFLVVAIVLASVSKVEIVATAPGKLTFSGRSKEIKPIENAIVQEIFVKDGQFVEKGQLLVSLTALGSDADIKKTMASLSLAKLENYRYQTLLTAIEKESLPVIDLSRTEFKDSSEEDRLRIKHLIEEQYTTWQKQKTQKTLAYKRKEAEKQTIFAYVRKYEGATRIEQEKFKDFKALYKQKSLSKHELLAQENKLIEAQNELAVYRSKLNELENDLLNVKEELELITQFFKSDVLEKLKQHIENERQLRLELEKNNQRRQASMIRAPVSGTVQQLKIHTIGGVVTTAETLMIIVPEDDVLEATALVPNKDIGFVAAGQEVIIKVETFPYTRYGYLTGRIKHISPDAIEQPNVGLVFNATIAIDRKNLTSPDGRKIDLSSGMTITAEIKTGERSVMSYLLSPLEESVTESLRER</sequence>
<keyword id="KW-0997">Cell inner membrane</keyword>
<keyword id="KW-1003">Cell membrane</keyword>
<keyword id="KW-0204">Cytolysis</keyword>
<keyword id="KW-0354">Hemolysis</keyword>
<keyword id="KW-0472">Membrane</keyword>
<keyword id="KW-0812">Transmembrane</keyword>
<keyword id="KW-1133">Transmembrane helix</keyword>
<keyword id="KW-0813">Transport</keyword>
<gene>
    <name type="primary">lktD</name>
</gene>
<organism>
    <name type="scientific">Mannheimia haemolytica</name>
    <name type="common">Pasteurella haemolytica</name>
    <dbReference type="NCBI Taxonomy" id="75985"/>
    <lineage>
        <taxon>Bacteria</taxon>
        <taxon>Pseudomonadati</taxon>
        <taxon>Pseudomonadota</taxon>
        <taxon>Gammaproteobacteria</taxon>
        <taxon>Pasteurellales</taxon>
        <taxon>Pasteurellaceae</taxon>
        <taxon>Mannheimia</taxon>
    </lineage>
</organism>
<feature type="chain" id="PRO_0000201876" description="Leukotoxin secretion protein D">
    <location>
        <begin position="1"/>
        <end position="478"/>
    </location>
</feature>
<feature type="topological domain" description="Cytoplasmic" evidence="1">
    <location>
        <begin position="1"/>
        <end position="59"/>
    </location>
</feature>
<feature type="transmembrane region" description="Helical" evidence="1">
    <location>
        <begin position="60"/>
        <end position="80"/>
    </location>
</feature>
<feature type="topological domain" description="Periplasmic" evidence="1">
    <location>
        <begin position="81"/>
        <end position="478"/>
    </location>
</feature>
<feature type="sequence conflict" description="In Ref. 3; AAA25545." evidence="2" ref="3">
    <original>T</original>
    <variation>I</variation>
    <location>
        <position position="18"/>
    </location>
</feature>
<feature type="sequence conflict" description="In Ref. 3; AAA25545." evidence="2" ref="3">
    <original>D</original>
    <variation>E</variation>
    <location>
        <position position="47"/>
    </location>
</feature>
<feature type="sequence conflict" description="In Ref. 3; AAA25545." evidence="2" ref="3">
    <original>N</original>
    <variation>T</variation>
    <location>
        <position position="150"/>
    </location>
</feature>
<feature type="sequence conflict" description="In Ref. 3; AAA25545." evidence="2" ref="3">
    <original>F</original>
    <variation>L</variation>
    <location>
        <position position="236"/>
    </location>
</feature>
<feature type="sequence conflict" description="In Ref. 3; AAA25545." evidence="2" ref="3">
    <original>EL</original>
    <variation>AV</variation>
    <location>
        <begin position="266"/>
        <end position="267"/>
    </location>
</feature>
<dbReference type="EMBL" id="M20730">
    <property type="protein sequence ID" value="AAA25531.1"/>
    <property type="molecule type" value="Genomic_DNA"/>
</dbReference>
<dbReference type="EMBL" id="M24197">
    <property type="protein sequence ID" value="AAA25545.1"/>
    <property type="molecule type" value="Genomic_DNA"/>
</dbReference>
<dbReference type="PIR" id="D30169">
    <property type="entry name" value="D30169"/>
</dbReference>
<dbReference type="SMR" id="P16534"/>
<dbReference type="STRING" id="75985.WC39_13380"/>
<dbReference type="GO" id="GO:0005886">
    <property type="term" value="C:plasma membrane"/>
    <property type="evidence" value="ECO:0007669"/>
    <property type="project" value="UniProtKB-SubCell"/>
</dbReference>
<dbReference type="GO" id="GO:0031640">
    <property type="term" value="P:killing of cells of another organism"/>
    <property type="evidence" value="ECO:0007669"/>
    <property type="project" value="UniProtKB-KW"/>
</dbReference>
<dbReference type="GO" id="GO:0009306">
    <property type="term" value="P:protein secretion"/>
    <property type="evidence" value="ECO:0007669"/>
    <property type="project" value="InterPro"/>
</dbReference>
<dbReference type="GO" id="GO:0055085">
    <property type="term" value="P:transmembrane transport"/>
    <property type="evidence" value="ECO:0007669"/>
    <property type="project" value="InterPro"/>
</dbReference>
<dbReference type="Gene3D" id="2.40.30.170">
    <property type="match status" value="1"/>
</dbReference>
<dbReference type="InterPro" id="IPR050739">
    <property type="entry name" value="MFP"/>
</dbReference>
<dbReference type="InterPro" id="IPR006144">
    <property type="entry name" value="Secretion_HlyD_CS"/>
</dbReference>
<dbReference type="InterPro" id="IPR010129">
    <property type="entry name" value="T1SS_HlyD"/>
</dbReference>
<dbReference type="NCBIfam" id="TIGR01843">
    <property type="entry name" value="type_I_hlyD"/>
    <property type="match status" value="1"/>
</dbReference>
<dbReference type="PANTHER" id="PTHR30386:SF27">
    <property type="entry name" value="MEMBRANE FUSION PROTEIN (MFP) FAMILY PROTEIN"/>
    <property type="match status" value="1"/>
</dbReference>
<dbReference type="PANTHER" id="PTHR30386">
    <property type="entry name" value="MEMBRANE FUSION SUBUNIT OF EMRAB-TOLC MULTIDRUG EFFLUX PUMP"/>
    <property type="match status" value="1"/>
</dbReference>
<dbReference type="Pfam" id="PF13437">
    <property type="entry name" value="HlyD_3"/>
    <property type="match status" value="1"/>
</dbReference>
<dbReference type="PRINTS" id="PR01490">
    <property type="entry name" value="RTXTOXIND"/>
</dbReference>
<dbReference type="SUPFAM" id="SSF111369">
    <property type="entry name" value="HlyD-like secretion proteins"/>
    <property type="match status" value="1"/>
</dbReference>
<dbReference type="PROSITE" id="PS00543">
    <property type="entry name" value="HLYD_FAMILY"/>
    <property type="match status" value="1"/>
</dbReference>
<reference key="1">
    <citation type="journal article" date="1987" name="Infect. Immun.">
        <title>Nucleotide sequence of the leukotoxin genes of Pasteurella haemolytica A1.</title>
        <authorList>
            <person name="Lo R.Y.C."/>
            <person name="Strathdee C.A."/>
            <person name="Shewen P.E."/>
        </authorList>
    </citation>
    <scope>NUCLEOTIDE SEQUENCE [GENOMIC DNA]</scope>
    <source>
        <strain>Serotype A1</strain>
    </source>
</reference>
<reference key="2">
    <citation type="journal article" date="1989" name="J. Bacteriol.">
        <title>Cloning, nucleotide sequence, and characterization of genes encoding the secretion function of the Pasteurella haemolytica leukotoxin determinant.</title>
        <authorList>
            <person name="Strathdee C.A."/>
            <person name="Lo R.Y.C."/>
        </authorList>
    </citation>
    <scope>NUCLEOTIDE SEQUENCE [GENOMIC DNA]</scope>
    <source>
        <strain>Serotype A1</strain>
    </source>
</reference>
<reference key="3">
    <citation type="journal article" date="1989" name="DNA">
        <title>DNA sequence of the Pasteurella haemolytica leukotoxin gene cluster.</title>
        <authorList>
            <person name="Highlander S.K."/>
            <person name="Chidambaram M."/>
            <person name="Engler M.J."/>
            <person name="Weinstock G.M."/>
        </authorList>
    </citation>
    <scope>NUCLEOTIDE SEQUENCE [GENOMIC DNA]</scope>
    <source>
        <strain>Serotype A1 / PH101</strain>
    </source>
</reference>
<name>HLYD_MANHA</name>
<proteinExistence type="inferred from homology"/>
<protein>
    <recommendedName>
        <fullName>Leukotoxin secretion protein D</fullName>
    </recommendedName>
</protein>
<accession>P16534</accession>
<evidence type="ECO:0000255" key="1"/>
<evidence type="ECO:0000305" key="2"/>